<name>ISPH_SODGM</name>
<gene>
    <name evidence="1" type="primary">ispH</name>
    <name type="ordered locus">SG0417</name>
</gene>
<sequence length="316" mass="34560">MRILLANPRGFCAGVDRAISIVERALEIYGAPIYVRHEVVHNRYVVDTLRQRGAIFIEQITEVPDGSILIFSAHGVSQAVRAEARSRDLTVFDATCPLVTKVHMEVARASRKGTEAILIGHTGHPEVEGTMGQYNNPAGGMYLVESPEDVWQLEVKNVDNLCFMTQTTLSVDDTSDVIDALRARFPAIIGPRKDDICYATTNRQEAVRSLAADADVVLVVGSKNSSNSNRLSELAQRVGKPAYLIDSAGDIQESWLQGTQTIGVTAGASAPDILVQQVIERLRLLGAEGAKELIGREENIVFEVPKELRLEVKTVE</sequence>
<keyword id="KW-0004">4Fe-4S</keyword>
<keyword id="KW-0408">Iron</keyword>
<keyword id="KW-0411">Iron-sulfur</keyword>
<keyword id="KW-0414">Isoprene biosynthesis</keyword>
<keyword id="KW-0479">Metal-binding</keyword>
<keyword id="KW-0560">Oxidoreductase</keyword>
<accession>Q2NVY3</accession>
<proteinExistence type="inferred from homology"/>
<evidence type="ECO:0000255" key="1">
    <source>
        <dbReference type="HAMAP-Rule" id="MF_00191"/>
    </source>
</evidence>
<reference key="1">
    <citation type="journal article" date="2006" name="Genome Res.">
        <title>Massive genome erosion and functional adaptations provide insights into the symbiotic lifestyle of Sodalis glossinidius in the tsetse host.</title>
        <authorList>
            <person name="Toh H."/>
            <person name="Weiss B.L."/>
            <person name="Perkin S.A.H."/>
            <person name="Yamashita A."/>
            <person name="Oshima K."/>
            <person name="Hattori M."/>
            <person name="Aksoy S."/>
        </authorList>
    </citation>
    <scope>NUCLEOTIDE SEQUENCE [LARGE SCALE GENOMIC DNA]</scope>
    <source>
        <strain>morsitans</strain>
    </source>
</reference>
<dbReference type="EC" id="1.17.7.4" evidence="1"/>
<dbReference type="EMBL" id="AP008232">
    <property type="protein sequence ID" value="BAE73692.1"/>
    <property type="molecule type" value="Genomic_DNA"/>
</dbReference>
<dbReference type="RefSeq" id="WP_011410280.1">
    <property type="nucleotide sequence ID" value="NC_007712.1"/>
</dbReference>
<dbReference type="SMR" id="Q2NVY3"/>
<dbReference type="STRING" id="343509.SG0417"/>
<dbReference type="KEGG" id="sgl:SG0417"/>
<dbReference type="eggNOG" id="COG0761">
    <property type="taxonomic scope" value="Bacteria"/>
</dbReference>
<dbReference type="HOGENOM" id="CLU_027486_1_0_6"/>
<dbReference type="OrthoDB" id="9804068at2"/>
<dbReference type="BioCyc" id="SGLO343509:SGP1_RS03835-MONOMER"/>
<dbReference type="UniPathway" id="UPA00056">
    <property type="reaction ID" value="UER00097"/>
</dbReference>
<dbReference type="UniPathway" id="UPA00059">
    <property type="reaction ID" value="UER00105"/>
</dbReference>
<dbReference type="Proteomes" id="UP000001932">
    <property type="component" value="Chromosome"/>
</dbReference>
<dbReference type="GO" id="GO:0051539">
    <property type="term" value="F:4 iron, 4 sulfur cluster binding"/>
    <property type="evidence" value="ECO:0007669"/>
    <property type="project" value="UniProtKB-UniRule"/>
</dbReference>
<dbReference type="GO" id="GO:0051745">
    <property type="term" value="F:4-hydroxy-3-methylbut-2-enyl diphosphate reductase activity"/>
    <property type="evidence" value="ECO:0007669"/>
    <property type="project" value="UniProtKB-UniRule"/>
</dbReference>
<dbReference type="GO" id="GO:0046872">
    <property type="term" value="F:metal ion binding"/>
    <property type="evidence" value="ECO:0007669"/>
    <property type="project" value="UniProtKB-KW"/>
</dbReference>
<dbReference type="GO" id="GO:0050992">
    <property type="term" value="P:dimethylallyl diphosphate biosynthetic process"/>
    <property type="evidence" value="ECO:0007669"/>
    <property type="project" value="UniProtKB-UniRule"/>
</dbReference>
<dbReference type="GO" id="GO:0019288">
    <property type="term" value="P:isopentenyl diphosphate biosynthetic process, methylerythritol 4-phosphate pathway"/>
    <property type="evidence" value="ECO:0007669"/>
    <property type="project" value="UniProtKB-UniRule"/>
</dbReference>
<dbReference type="GO" id="GO:0016114">
    <property type="term" value="P:terpenoid biosynthetic process"/>
    <property type="evidence" value="ECO:0007669"/>
    <property type="project" value="UniProtKB-UniRule"/>
</dbReference>
<dbReference type="CDD" id="cd13944">
    <property type="entry name" value="lytB_ispH"/>
    <property type="match status" value="1"/>
</dbReference>
<dbReference type="FunFam" id="3.40.50.11270:FF:000001">
    <property type="entry name" value="4-hydroxy-3-methylbut-2-enyl diphosphate reductase"/>
    <property type="match status" value="1"/>
</dbReference>
<dbReference type="Gene3D" id="3.40.50.11270">
    <property type="match status" value="1"/>
</dbReference>
<dbReference type="Gene3D" id="3.40.1010.20">
    <property type="entry name" value="4-hydroxy-3-methylbut-2-enyl diphosphate reductase, catalytic domain"/>
    <property type="match status" value="2"/>
</dbReference>
<dbReference type="HAMAP" id="MF_00191">
    <property type="entry name" value="IspH"/>
    <property type="match status" value="1"/>
</dbReference>
<dbReference type="InterPro" id="IPR003451">
    <property type="entry name" value="LytB/IspH"/>
</dbReference>
<dbReference type="NCBIfam" id="TIGR00216">
    <property type="entry name" value="ispH_lytB"/>
    <property type="match status" value="1"/>
</dbReference>
<dbReference type="NCBIfam" id="NF002188">
    <property type="entry name" value="PRK01045.1-2"/>
    <property type="match status" value="1"/>
</dbReference>
<dbReference type="NCBIfam" id="NF002190">
    <property type="entry name" value="PRK01045.1-4"/>
    <property type="match status" value="1"/>
</dbReference>
<dbReference type="PANTHER" id="PTHR30426">
    <property type="entry name" value="4-HYDROXY-3-METHYLBUT-2-ENYL DIPHOSPHATE REDUCTASE"/>
    <property type="match status" value="1"/>
</dbReference>
<dbReference type="PANTHER" id="PTHR30426:SF0">
    <property type="entry name" value="4-HYDROXY-3-METHYLBUT-2-ENYL DIPHOSPHATE REDUCTASE"/>
    <property type="match status" value="1"/>
</dbReference>
<dbReference type="Pfam" id="PF02401">
    <property type="entry name" value="LYTB"/>
    <property type="match status" value="1"/>
</dbReference>
<protein>
    <recommendedName>
        <fullName evidence="1">4-hydroxy-3-methylbut-2-enyl diphosphate reductase</fullName>
        <shortName evidence="1">HMBPP reductase</shortName>
        <ecNumber evidence="1">1.17.7.4</ecNumber>
    </recommendedName>
</protein>
<feature type="chain" id="PRO_1000021182" description="4-hydroxy-3-methylbut-2-enyl diphosphate reductase">
    <location>
        <begin position="1"/>
        <end position="316"/>
    </location>
</feature>
<feature type="active site" description="Proton donor" evidence="1">
    <location>
        <position position="126"/>
    </location>
</feature>
<feature type="binding site" evidence="1">
    <location>
        <position position="12"/>
    </location>
    <ligand>
        <name>[4Fe-4S] cluster</name>
        <dbReference type="ChEBI" id="CHEBI:49883"/>
    </ligand>
</feature>
<feature type="binding site" evidence="1">
    <location>
        <position position="41"/>
    </location>
    <ligand>
        <name>(2E)-4-hydroxy-3-methylbut-2-enyl diphosphate</name>
        <dbReference type="ChEBI" id="CHEBI:128753"/>
    </ligand>
</feature>
<feature type="binding site" evidence="1">
    <location>
        <position position="41"/>
    </location>
    <ligand>
        <name>dimethylallyl diphosphate</name>
        <dbReference type="ChEBI" id="CHEBI:57623"/>
    </ligand>
</feature>
<feature type="binding site" evidence="1">
    <location>
        <position position="41"/>
    </location>
    <ligand>
        <name>isopentenyl diphosphate</name>
        <dbReference type="ChEBI" id="CHEBI:128769"/>
    </ligand>
</feature>
<feature type="binding site" evidence="1">
    <location>
        <position position="74"/>
    </location>
    <ligand>
        <name>(2E)-4-hydroxy-3-methylbut-2-enyl diphosphate</name>
        <dbReference type="ChEBI" id="CHEBI:128753"/>
    </ligand>
</feature>
<feature type="binding site" evidence="1">
    <location>
        <position position="74"/>
    </location>
    <ligand>
        <name>dimethylallyl diphosphate</name>
        <dbReference type="ChEBI" id="CHEBI:57623"/>
    </ligand>
</feature>
<feature type="binding site" evidence="1">
    <location>
        <position position="74"/>
    </location>
    <ligand>
        <name>isopentenyl diphosphate</name>
        <dbReference type="ChEBI" id="CHEBI:128769"/>
    </ligand>
</feature>
<feature type="binding site" evidence="1">
    <location>
        <position position="96"/>
    </location>
    <ligand>
        <name>[4Fe-4S] cluster</name>
        <dbReference type="ChEBI" id="CHEBI:49883"/>
    </ligand>
</feature>
<feature type="binding site" evidence="1">
    <location>
        <position position="124"/>
    </location>
    <ligand>
        <name>(2E)-4-hydroxy-3-methylbut-2-enyl diphosphate</name>
        <dbReference type="ChEBI" id="CHEBI:128753"/>
    </ligand>
</feature>
<feature type="binding site" evidence="1">
    <location>
        <position position="124"/>
    </location>
    <ligand>
        <name>dimethylallyl diphosphate</name>
        <dbReference type="ChEBI" id="CHEBI:57623"/>
    </ligand>
</feature>
<feature type="binding site" evidence="1">
    <location>
        <position position="124"/>
    </location>
    <ligand>
        <name>isopentenyl diphosphate</name>
        <dbReference type="ChEBI" id="CHEBI:128769"/>
    </ligand>
</feature>
<feature type="binding site" evidence="1">
    <location>
        <position position="167"/>
    </location>
    <ligand>
        <name>(2E)-4-hydroxy-3-methylbut-2-enyl diphosphate</name>
        <dbReference type="ChEBI" id="CHEBI:128753"/>
    </ligand>
</feature>
<feature type="binding site" evidence="1">
    <location>
        <position position="197"/>
    </location>
    <ligand>
        <name>[4Fe-4S] cluster</name>
        <dbReference type="ChEBI" id="CHEBI:49883"/>
    </ligand>
</feature>
<feature type="binding site" evidence="1">
    <location>
        <position position="225"/>
    </location>
    <ligand>
        <name>(2E)-4-hydroxy-3-methylbut-2-enyl diphosphate</name>
        <dbReference type="ChEBI" id="CHEBI:128753"/>
    </ligand>
</feature>
<feature type="binding site" evidence="1">
    <location>
        <position position="225"/>
    </location>
    <ligand>
        <name>dimethylallyl diphosphate</name>
        <dbReference type="ChEBI" id="CHEBI:57623"/>
    </ligand>
</feature>
<feature type="binding site" evidence="1">
    <location>
        <position position="225"/>
    </location>
    <ligand>
        <name>isopentenyl diphosphate</name>
        <dbReference type="ChEBI" id="CHEBI:128769"/>
    </ligand>
</feature>
<feature type="binding site" evidence="1">
    <location>
        <position position="226"/>
    </location>
    <ligand>
        <name>(2E)-4-hydroxy-3-methylbut-2-enyl diphosphate</name>
        <dbReference type="ChEBI" id="CHEBI:128753"/>
    </ligand>
</feature>
<feature type="binding site" evidence="1">
    <location>
        <position position="226"/>
    </location>
    <ligand>
        <name>dimethylallyl diphosphate</name>
        <dbReference type="ChEBI" id="CHEBI:57623"/>
    </ligand>
</feature>
<feature type="binding site" evidence="1">
    <location>
        <position position="226"/>
    </location>
    <ligand>
        <name>isopentenyl diphosphate</name>
        <dbReference type="ChEBI" id="CHEBI:128769"/>
    </ligand>
</feature>
<feature type="binding site" evidence="1">
    <location>
        <position position="227"/>
    </location>
    <ligand>
        <name>(2E)-4-hydroxy-3-methylbut-2-enyl diphosphate</name>
        <dbReference type="ChEBI" id="CHEBI:128753"/>
    </ligand>
</feature>
<feature type="binding site" evidence="1">
    <location>
        <position position="227"/>
    </location>
    <ligand>
        <name>dimethylallyl diphosphate</name>
        <dbReference type="ChEBI" id="CHEBI:57623"/>
    </ligand>
</feature>
<feature type="binding site" evidence="1">
    <location>
        <position position="227"/>
    </location>
    <ligand>
        <name>isopentenyl diphosphate</name>
        <dbReference type="ChEBI" id="CHEBI:128769"/>
    </ligand>
</feature>
<feature type="binding site" evidence="1">
    <location>
        <position position="269"/>
    </location>
    <ligand>
        <name>(2E)-4-hydroxy-3-methylbut-2-enyl diphosphate</name>
        <dbReference type="ChEBI" id="CHEBI:128753"/>
    </ligand>
</feature>
<feature type="binding site" evidence="1">
    <location>
        <position position="269"/>
    </location>
    <ligand>
        <name>dimethylallyl diphosphate</name>
        <dbReference type="ChEBI" id="CHEBI:57623"/>
    </ligand>
</feature>
<feature type="binding site" evidence="1">
    <location>
        <position position="269"/>
    </location>
    <ligand>
        <name>isopentenyl diphosphate</name>
        <dbReference type="ChEBI" id="CHEBI:128769"/>
    </ligand>
</feature>
<organism>
    <name type="scientific">Sodalis glossinidius (strain morsitans)</name>
    <dbReference type="NCBI Taxonomy" id="343509"/>
    <lineage>
        <taxon>Bacteria</taxon>
        <taxon>Pseudomonadati</taxon>
        <taxon>Pseudomonadota</taxon>
        <taxon>Gammaproteobacteria</taxon>
        <taxon>Enterobacterales</taxon>
        <taxon>Bruguierivoracaceae</taxon>
        <taxon>Sodalis</taxon>
    </lineage>
</organism>
<comment type="function">
    <text evidence="1">Catalyzes the conversion of 1-hydroxy-2-methyl-2-(E)-butenyl 4-diphosphate (HMBPP) into a mixture of isopentenyl diphosphate (IPP) and dimethylallyl diphosphate (DMAPP). Acts in the terminal step of the DOXP/MEP pathway for isoprenoid precursor biosynthesis.</text>
</comment>
<comment type="catalytic activity">
    <reaction evidence="1">
        <text>isopentenyl diphosphate + 2 oxidized [2Fe-2S]-[ferredoxin] + H2O = (2E)-4-hydroxy-3-methylbut-2-enyl diphosphate + 2 reduced [2Fe-2S]-[ferredoxin] + 2 H(+)</text>
        <dbReference type="Rhea" id="RHEA:24488"/>
        <dbReference type="Rhea" id="RHEA-COMP:10000"/>
        <dbReference type="Rhea" id="RHEA-COMP:10001"/>
        <dbReference type="ChEBI" id="CHEBI:15377"/>
        <dbReference type="ChEBI" id="CHEBI:15378"/>
        <dbReference type="ChEBI" id="CHEBI:33737"/>
        <dbReference type="ChEBI" id="CHEBI:33738"/>
        <dbReference type="ChEBI" id="CHEBI:128753"/>
        <dbReference type="ChEBI" id="CHEBI:128769"/>
        <dbReference type="EC" id="1.17.7.4"/>
    </reaction>
</comment>
<comment type="catalytic activity">
    <reaction evidence="1">
        <text>dimethylallyl diphosphate + 2 oxidized [2Fe-2S]-[ferredoxin] + H2O = (2E)-4-hydroxy-3-methylbut-2-enyl diphosphate + 2 reduced [2Fe-2S]-[ferredoxin] + 2 H(+)</text>
        <dbReference type="Rhea" id="RHEA:24825"/>
        <dbReference type="Rhea" id="RHEA-COMP:10000"/>
        <dbReference type="Rhea" id="RHEA-COMP:10001"/>
        <dbReference type="ChEBI" id="CHEBI:15377"/>
        <dbReference type="ChEBI" id="CHEBI:15378"/>
        <dbReference type="ChEBI" id="CHEBI:33737"/>
        <dbReference type="ChEBI" id="CHEBI:33738"/>
        <dbReference type="ChEBI" id="CHEBI:57623"/>
        <dbReference type="ChEBI" id="CHEBI:128753"/>
        <dbReference type="EC" id="1.17.7.4"/>
    </reaction>
</comment>
<comment type="cofactor">
    <cofactor evidence="1">
        <name>[4Fe-4S] cluster</name>
        <dbReference type="ChEBI" id="CHEBI:49883"/>
    </cofactor>
    <text evidence="1">Binds 1 [4Fe-4S] cluster per subunit.</text>
</comment>
<comment type="pathway">
    <text evidence="1">Isoprenoid biosynthesis; dimethylallyl diphosphate biosynthesis; dimethylallyl diphosphate from (2E)-4-hydroxy-3-methylbutenyl diphosphate: step 1/1.</text>
</comment>
<comment type="pathway">
    <text evidence="1">Isoprenoid biosynthesis; isopentenyl diphosphate biosynthesis via DXP pathway; isopentenyl diphosphate from 1-deoxy-D-xylulose 5-phosphate: step 6/6.</text>
</comment>
<comment type="subunit">
    <text evidence="1">Homodimer.</text>
</comment>
<comment type="similarity">
    <text evidence="1">Belongs to the IspH family.</text>
</comment>